<proteinExistence type="inferred from homology"/>
<keyword id="KW-0028">Amino-acid biosynthesis</keyword>
<keyword id="KW-0055">Arginine biosynthesis</keyword>
<keyword id="KW-0963">Cytoplasm</keyword>
<keyword id="KW-0456">Lyase</keyword>
<accession>Q02EA0</accession>
<dbReference type="EC" id="4.3.2.1" evidence="1"/>
<dbReference type="EMBL" id="CP000438">
    <property type="protein sequence ID" value="ABJ14647.1"/>
    <property type="molecule type" value="Genomic_DNA"/>
</dbReference>
<dbReference type="RefSeq" id="WP_003141964.1">
    <property type="nucleotide sequence ID" value="NZ_CP034244.1"/>
</dbReference>
<dbReference type="SMR" id="Q02EA0"/>
<dbReference type="KEGG" id="pau:PA14_69500"/>
<dbReference type="PseudoCAP" id="PA14_69500"/>
<dbReference type="HOGENOM" id="CLU_027272_2_3_6"/>
<dbReference type="BioCyc" id="PAER208963:G1G74-5854-MONOMER"/>
<dbReference type="UniPathway" id="UPA00068">
    <property type="reaction ID" value="UER00114"/>
</dbReference>
<dbReference type="Proteomes" id="UP000000653">
    <property type="component" value="Chromosome"/>
</dbReference>
<dbReference type="GO" id="GO:0005829">
    <property type="term" value="C:cytosol"/>
    <property type="evidence" value="ECO:0007669"/>
    <property type="project" value="TreeGrafter"/>
</dbReference>
<dbReference type="GO" id="GO:0004056">
    <property type="term" value="F:argininosuccinate lyase activity"/>
    <property type="evidence" value="ECO:0007669"/>
    <property type="project" value="UniProtKB-UniRule"/>
</dbReference>
<dbReference type="GO" id="GO:0042450">
    <property type="term" value="P:arginine biosynthetic process via ornithine"/>
    <property type="evidence" value="ECO:0007669"/>
    <property type="project" value="InterPro"/>
</dbReference>
<dbReference type="GO" id="GO:0006526">
    <property type="term" value="P:L-arginine biosynthetic process"/>
    <property type="evidence" value="ECO:0007669"/>
    <property type="project" value="UniProtKB-UniRule"/>
</dbReference>
<dbReference type="CDD" id="cd01359">
    <property type="entry name" value="Argininosuccinate_lyase"/>
    <property type="match status" value="1"/>
</dbReference>
<dbReference type="FunFam" id="1.10.275.10:FF:000002">
    <property type="entry name" value="Argininosuccinate lyase"/>
    <property type="match status" value="1"/>
</dbReference>
<dbReference type="FunFam" id="1.10.40.30:FF:000001">
    <property type="entry name" value="Argininosuccinate lyase"/>
    <property type="match status" value="1"/>
</dbReference>
<dbReference type="FunFam" id="1.20.200.10:FF:000015">
    <property type="entry name" value="argininosuccinate lyase isoform X2"/>
    <property type="match status" value="1"/>
</dbReference>
<dbReference type="Gene3D" id="1.10.40.30">
    <property type="entry name" value="Fumarase/aspartase (C-terminal domain)"/>
    <property type="match status" value="1"/>
</dbReference>
<dbReference type="Gene3D" id="1.20.200.10">
    <property type="entry name" value="Fumarase/aspartase (Central domain)"/>
    <property type="match status" value="1"/>
</dbReference>
<dbReference type="Gene3D" id="1.10.275.10">
    <property type="entry name" value="Fumarase/aspartase (N-terminal domain)"/>
    <property type="match status" value="1"/>
</dbReference>
<dbReference type="HAMAP" id="MF_00006">
    <property type="entry name" value="Arg_succ_lyase"/>
    <property type="match status" value="1"/>
</dbReference>
<dbReference type="InterPro" id="IPR029419">
    <property type="entry name" value="Arg_succ_lyase_C"/>
</dbReference>
<dbReference type="InterPro" id="IPR009049">
    <property type="entry name" value="Argininosuccinate_lyase"/>
</dbReference>
<dbReference type="InterPro" id="IPR024083">
    <property type="entry name" value="Fumarase/histidase_N"/>
</dbReference>
<dbReference type="InterPro" id="IPR020557">
    <property type="entry name" value="Fumarate_lyase_CS"/>
</dbReference>
<dbReference type="InterPro" id="IPR000362">
    <property type="entry name" value="Fumarate_lyase_fam"/>
</dbReference>
<dbReference type="InterPro" id="IPR022761">
    <property type="entry name" value="Fumarate_lyase_N"/>
</dbReference>
<dbReference type="InterPro" id="IPR008948">
    <property type="entry name" value="L-Aspartase-like"/>
</dbReference>
<dbReference type="NCBIfam" id="TIGR00838">
    <property type="entry name" value="argH"/>
    <property type="match status" value="1"/>
</dbReference>
<dbReference type="PANTHER" id="PTHR43814">
    <property type="entry name" value="ARGININOSUCCINATE LYASE"/>
    <property type="match status" value="1"/>
</dbReference>
<dbReference type="PANTHER" id="PTHR43814:SF1">
    <property type="entry name" value="ARGININOSUCCINATE LYASE"/>
    <property type="match status" value="1"/>
</dbReference>
<dbReference type="Pfam" id="PF14698">
    <property type="entry name" value="ASL_C2"/>
    <property type="match status" value="1"/>
</dbReference>
<dbReference type="Pfam" id="PF00206">
    <property type="entry name" value="Lyase_1"/>
    <property type="match status" value="1"/>
</dbReference>
<dbReference type="PRINTS" id="PR00145">
    <property type="entry name" value="ARGSUCLYASE"/>
</dbReference>
<dbReference type="PRINTS" id="PR00149">
    <property type="entry name" value="FUMRATELYASE"/>
</dbReference>
<dbReference type="SUPFAM" id="SSF48557">
    <property type="entry name" value="L-aspartase-like"/>
    <property type="match status" value="1"/>
</dbReference>
<dbReference type="PROSITE" id="PS00163">
    <property type="entry name" value="FUMARATE_LYASES"/>
    <property type="match status" value="1"/>
</dbReference>
<comment type="catalytic activity">
    <reaction evidence="1">
        <text>2-(N(omega)-L-arginino)succinate = fumarate + L-arginine</text>
        <dbReference type="Rhea" id="RHEA:24020"/>
        <dbReference type="ChEBI" id="CHEBI:29806"/>
        <dbReference type="ChEBI" id="CHEBI:32682"/>
        <dbReference type="ChEBI" id="CHEBI:57472"/>
        <dbReference type="EC" id="4.3.2.1"/>
    </reaction>
</comment>
<comment type="pathway">
    <text evidence="1">Amino-acid biosynthesis; L-arginine biosynthesis; L-arginine from L-ornithine and carbamoyl phosphate: step 3/3.</text>
</comment>
<comment type="subcellular location">
    <subcellularLocation>
        <location evidence="1">Cytoplasm</location>
    </subcellularLocation>
</comment>
<comment type="similarity">
    <text evidence="1">Belongs to the lyase 1 family. Argininosuccinate lyase subfamily.</text>
</comment>
<evidence type="ECO:0000255" key="1">
    <source>
        <dbReference type="HAMAP-Rule" id="MF_00006"/>
    </source>
</evidence>
<feature type="chain" id="PRO_1000000525" description="Argininosuccinate lyase">
    <location>
        <begin position="1"/>
        <end position="464"/>
    </location>
</feature>
<sequence>MSVEKTNQSWGGRFSEPVDAFVARFTASVDFDKRLYRHDIMGSIAHATMLAKVGVLSDAERDAIVDGLQQIQAEIEAGSFDWRVDLEDVHMNIEARLTDRIGVTGKKLHTGRSRNDQVATDIRLWLRDEIDTILAEITRLQEGLLGLAEAEADTIMPGFTHLQTAQPVTFGHHLLAWFEMLGRDYERLVDCRKRVNRMPLGSAALAGTTYPIQREITCQLLGFDAVGGNSLDGVSDRDFAIEFCAAASLAMMHLSRFSEELVLWTSAQFQFIDLPDRFCTGSSIMPQKKNPDVPELVRGKSGRVFGALTGLLTLMKGQPLAYNKDNQEDKEPLFDAADTLRDSLRAFADMVPAIRPRREIMREAARRGFSTATDLADYLVRKGLPFRDCHEIVGHAVKYGVDSGKDLAEMSLDELRRFSEQIDADVFDVLTLEGSVNARDHIGGTAPNQVRAAVARGRQLLAQR</sequence>
<gene>
    <name evidence="1" type="primary">argH</name>
    <name type="ordered locus">PA14_69500</name>
</gene>
<protein>
    <recommendedName>
        <fullName evidence="1">Argininosuccinate lyase</fullName>
        <shortName evidence="1">ASAL</shortName>
        <ecNumber evidence="1">4.3.2.1</ecNumber>
    </recommendedName>
    <alternativeName>
        <fullName evidence="1">Arginosuccinase</fullName>
    </alternativeName>
</protein>
<organism>
    <name type="scientific">Pseudomonas aeruginosa (strain UCBPP-PA14)</name>
    <dbReference type="NCBI Taxonomy" id="208963"/>
    <lineage>
        <taxon>Bacteria</taxon>
        <taxon>Pseudomonadati</taxon>
        <taxon>Pseudomonadota</taxon>
        <taxon>Gammaproteobacteria</taxon>
        <taxon>Pseudomonadales</taxon>
        <taxon>Pseudomonadaceae</taxon>
        <taxon>Pseudomonas</taxon>
    </lineage>
</organism>
<name>ARLY_PSEAB</name>
<reference key="1">
    <citation type="journal article" date="2006" name="Genome Biol.">
        <title>Genomic analysis reveals that Pseudomonas aeruginosa virulence is combinatorial.</title>
        <authorList>
            <person name="Lee D.G."/>
            <person name="Urbach J.M."/>
            <person name="Wu G."/>
            <person name="Liberati N.T."/>
            <person name="Feinbaum R.L."/>
            <person name="Miyata S."/>
            <person name="Diggins L.T."/>
            <person name="He J."/>
            <person name="Saucier M."/>
            <person name="Deziel E."/>
            <person name="Friedman L."/>
            <person name="Li L."/>
            <person name="Grills G."/>
            <person name="Montgomery K."/>
            <person name="Kucherlapati R."/>
            <person name="Rahme L.G."/>
            <person name="Ausubel F.M."/>
        </authorList>
    </citation>
    <scope>NUCLEOTIDE SEQUENCE [LARGE SCALE GENOMIC DNA]</scope>
    <source>
        <strain>UCBPP-PA14</strain>
    </source>
</reference>